<name>MNTR_BACAN</name>
<sequence length="142" mass="16596">MPTPSMEDYIEQIYLLIDEKGYARVSDIAEALSVHPSSVTKMVQKLDKDEYLIYEKYRGLVLTSKGKKIGERLVYRHELLEQFMRIIGVDESKIYNDVEGIEHHLSWEAIDRIGDLVQYFEQDEVRVETLRGVQKANEEKSN</sequence>
<feature type="chain" id="PRO_0000201115" description="HTH-type transcriptional regulator MntR">
    <location>
        <begin position="1"/>
        <end position="142"/>
    </location>
</feature>
<feature type="domain" description="HTH dtxR-type" evidence="1">
    <location>
        <begin position="1"/>
        <end position="63"/>
    </location>
</feature>
<feature type="binding site" evidence="1">
    <location>
        <position position="8"/>
    </location>
    <ligand>
        <name>Mn(2+)</name>
        <dbReference type="ChEBI" id="CHEBI:29035"/>
        <label>1</label>
    </ligand>
</feature>
<feature type="binding site" evidence="1">
    <location>
        <position position="11"/>
    </location>
    <ligand>
        <name>Mn(2+)</name>
        <dbReference type="ChEBI" id="CHEBI:29035"/>
        <label>2</label>
    </ligand>
</feature>
<feature type="binding site" evidence="1">
    <location>
        <position position="77"/>
    </location>
    <ligand>
        <name>Mn(2+)</name>
        <dbReference type="ChEBI" id="CHEBI:29035"/>
        <label>2</label>
    </ligand>
</feature>
<feature type="binding site" evidence="1">
    <location>
        <position position="99"/>
    </location>
    <ligand>
        <name>Mn(2+)</name>
        <dbReference type="ChEBI" id="CHEBI:29035"/>
        <label>1</label>
    </ligand>
</feature>
<feature type="binding site" evidence="1">
    <location>
        <position position="99"/>
    </location>
    <ligand>
        <name>Mn(2+)</name>
        <dbReference type="ChEBI" id="CHEBI:29035"/>
        <label>2</label>
    </ligand>
</feature>
<feature type="binding site" evidence="1">
    <location>
        <position position="102"/>
    </location>
    <ligand>
        <name>Mn(2+)</name>
        <dbReference type="ChEBI" id="CHEBI:29035"/>
        <label>1</label>
    </ligand>
</feature>
<feature type="binding site" evidence="1">
    <location>
        <position position="102"/>
    </location>
    <ligand>
        <name>Mn(2+)</name>
        <dbReference type="ChEBI" id="CHEBI:29035"/>
        <label>2</label>
    </ligand>
</feature>
<feature type="binding site" evidence="1">
    <location>
        <position position="103"/>
    </location>
    <ligand>
        <name>Mn(2+)</name>
        <dbReference type="ChEBI" id="CHEBI:29035"/>
        <label>1</label>
    </ligand>
</feature>
<comment type="function">
    <text evidence="1">Central regulator of manganese homeostasis.</text>
</comment>
<comment type="activity regulation">
    <text evidence="1">DNA binding is strongly activated by Mn(2+).</text>
</comment>
<comment type="subunit">
    <text evidence="1">Homodimer.</text>
</comment>
<comment type="subcellular location">
    <subcellularLocation>
        <location evidence="1">Cytoplasm</location>
    </subcellularLocation>
</comment>
<comment type="similarity">
    <text evidence="1">Belongs to the DtxR/MntR family.</text>
</comment>
<gene>
    <name evidence="1" type="primary">mntR</name>
    <name type="ordered locus">BA_4428</name>
    <name type="ordered locus">GBAA_4428</name>
    <name type="ordered locus">BAS4108</name>
</gene>
<organism>
    <name type="scientific">Bacillus anthracis</name>
    <dbReference type="NCBI Taxonomy" id="1392"/>
    <lineage>
        <taxon>Bacteria</taxon>
        <taxon>Bacillati</taxon>
        <taxon>Bacillota</taxon>
        <taxon>Bacilli</taxon>
        <taxon>Bacillales</taxon>
        <taxon>Bacillaceae</taxon>
        <taxon>Bacillus</taxon>
        <taxon>Bacillus cereus group</taxon>
    </lineage>
</organism>
<reference key="1">
    <citation type="journal article" date="2003" name="Nature">
        <title>The genome sequence of Bacillus anthracis Ames and comparison to closely related bacteria.</title>
        <authorList>
            <person name="Read T.D."/>
            <person name="Peterson S.N."/>
            <person name="Tourasse N.J."/>
            <person name="Baillie L.W."/>
            <person name="Paulsen I.T."/>
            <person name="Nelson K.E."/>
            <person name="Tettelin H."/>
            <person name="Fouts D.E."/>
            <person name="Eisen J.A."/>
            <person name="Gill S.R."/>
            <person name="Holtzapple E.K."/>
            <person name="Okstad O.A."/>
            <person name="Helgason E."/>
            <person name="Rilstone J."/>
            <person name="Wu M."/>
            <person name="Kolonay J.F."/>
            <person name="Beanan M.J."/>
            <person name="Dodson R.J."/>
            <person name="Brinkac L.M."/>
            <person name="Gwinn M.L."/>
            <person name="DeBoy R.T."/>
            <person name="Madpu R."/>
            <person name="Daugherty S.C."/>
            <person name="Durkin A.S."/>
            <person name="Haft D.H."/>
            <person name="Nelson W.C."/>
            <person name="Peterson J.D."/>
            <person name="Pop M."/>
            <person name="Khouri H.M."/>
            <person name="Radune D."/>
            <person name="Benton J.L."/>
            <person name="Mahamoud Y."/>
            <person name="Jiang L."/>
            <person name="Hance I.R."/>
            <person name="Weidman J.F."/>
            <person name="Berry K.J."/>
            <person name="Plaut R.D."/>
            <person name="Wolf A.M."/>
            <person name="Watkins K.L."/>
            <person name="Nierman W.C."/>
            <person name="Hazen A."/>
            <person name="Cline R.T."/>
            <person name="Redmond C."/>
            <person name="Thwaite J.E."/>
            <person name="White O."/>
            <person name="Salzberg S.L."/>
            <person name="Thomason B."/>
            <person name="Friedlander A.M."/>
            <person name="Koehler T.M."/>
            <person name="Hanna P.C."/>
            <person name="Kolstoe A.-B."/>
            <person name="Fraser C.M."/>
        </authorList>
    </citation>
    <scope>NUCLEOTIDE SEQUENCE [LARGE SCALE GENOMIC DNA]</scope>
    <source>
        <strain>Ames / isolate Porton</strain>
    </source>
</reference>
<reference key="2">
    <citation type="journal article" date="2009" name="J. Bacteriol.">
        <title>The complete genome sequence of Bacillus anthracis Ames 'Ancestor'.</title>
        <authorList>
            <person name="Ravel J."/>
            <person name="Jiang L."/>
            <person name="Stanley S.T."/>
            <person name="Wilson M.R."/>
            <person name="Decker R.S."/>
            <person name="Read T.D."/>
            <person name="Worsham P."/>
            <person name="Keim P.S."/>
            <person name="Salzberg S.L."/>
            <person name="Fraser-Liggett C.M."/>
            <person name="Rasko D.A."/>
        </authorList>
    </citation>
    <scope>NUCLEOTIDE SEQUENCE [LARGE SCALE GENOMIC DNA]</scope>
    <source>
        <strain>Ames ancestor</strain>
    </source>
</reference>
<reference key="3">
    <citation type="submission" date="2004-01" db="EMBL/GenBank/DDBJ databases">
        <title>Complete genome sequence of Bacillus anthracis Sterne.</title>
        <authorList>
            <person name="Brettin T.S."/>
            <person name="Bruce D."/>
            <person name="Challacombe J.F."/>
            <person name="Gilna P."/>
            <person name="Han C."/>
            <person name="Hill K."/>
            <person name="Hitchcock P."/>
            <person name="Jackson P."/>
            <person name="Keim P."/>
            <person name="Longmire J."/>
            <person name="Lucas S."/>
            <person name="Okinaka R."/>
            <person name="Richardson P."/>
            <person name="Rubin E."/>
            <person name="Tice H."/>
        </authorList>
    </citation>
    <scope>NUCLEOTIDE SEQUENCE [LARGE SCALE GENOMIC DNA]</scope>
    <source>
        <strain>Sterne</strain>
    </source>
</reference>
<evidence type="ECO:0000255" key="1">
    <source>
        <dbReference type="HAMAP-Rule" id="MF_00732"/>
    </source>
</evidence>
<dbReference type="EMBL" id="AE016879">
    <property type="protein sequence ID" value="AAP28142.1"/>
    <property type="molecule type" value="Genomic_DNA"/>
</dbReference>
<dbReference type="EMBL" id="AE017334">
    <property type="protein sequence ID" value="AAT33545.1"/>
    <property type="molecule type" value="Genomic_DNA"/>
</dbReference>
<dbReference type="EMBL" id="AE017225">
    <property type="protein sequence ID" value="AAT56409.1"/>
    <property type="molecule type" value="Genomic_DNA"/>
</dbReference>
<dbReference type="RefSeq" id="NP_846656.1">
    <property type="nucleotide sequence ID" value="NC_003997.3"/>
</dbReference>
<dbReference type="RefSeq" id="WP_001143076.1">
    <property type="nucleotide sequence ID" value="NZ_WXXJ01000027.1"/>
</dbReference>
<dbReference type="RefSeq" id="YP_030358.1">
    <property type="nucleotide sequence ID" value="NC_005945.1"/>
</dbReference>
<dbReference type="SMR" id="Q81M27"/>
<dbReference type="STRING" id="261594.GBAA_4428"/>
<dbReference type="DNASU" id="1087795"/>
<dbReference type="GeneID" id="75087347"/>
<dbReference type="KEGG" id="ban:BA_4428"/>
<dbReference type="KEGG" id="bar:GBAA_4428"/>
<dbReference type="KEGG" id="bat:BAS4108"/>
<dbReference type="PATRIC" id="fig|198094.11.peg.4396"/>
<dbReference type="eggNOG" id="COG1321">
    <property type="taxonomic scope" value="Bacteria"/>
</dbReference>
<dbReference type="HOGENOM" id="CLU_069532_3_0_9"/>
<dbReference type="OMA" id="SWDAIDR"/>
<dbReference type="OrthoDB" id="9791355at2"/>
<dbReference type="Proteomes" id="UP000000427">
    <property type="component" value="Chromosome"/>
</dbReference>
<dbReference type="Proteomes" id="UP000000594">
    <property type="component" value="Chromosome"/>
</dbReference>
<dbReference type="GO" id="GO:0005737">
    <property type="term" value="C:cytoplasm"/>
    <property type="evidence" value="ECO:0007669"/>
    <property type="project" value="UniProtKB-SubCell"/>
</dbReference>
<dbReference type="GO" id="GO:0003677">
    <property type="term" value="F:DNA binding"/>
    <property type="evidence" value="ECO:0007669"/>
    <property type="project" value="UniProtKB-KW"/>
</dbReference>
<dbReference type="GO" id="GO:0003700">
    <property type="term" value="F:DNA-binding transcription factor activity"/>
    <property type="evidence" value="ECO:0007669"/>
    <property type="project" value="UniProtKB-UniRule"/>
</dbReference>
<dbReference type="GO" id="GO:0030145">
    <property type="term" value="F:manganese ion binding"/>
    <property type="evidence" value="ECO:0007669"/>
    <property type="project" value="UniProtKB-UniRule"/>
</dbReference>
<dbReference type="GO" id="GO:0046983">
    <property type="term" value="F:protein dimerization activity"/>
    <property type="evidence" value="ECO:0007669"/>
    <property type="project" value="InterPro"/>
</dbReference>
<dbReference type="GO" id="GO:0030026">
    <property type="term" value="P:intracellular manganese ion homeostasis"/>
    <property type="evidence" value="ECO:0007669"/>
    <property type="project" value="UniProtKB-UniRule"/>
</dbReference>
<dbReference type="FunFam" id="1.10.10.10:FF:000189">
    <property type="entry name" value="HTH-type transcriptional regulator MntR"/>
    <property type="match status" value="1"/>
</dbReference>
<dbReference type="FunFam" id="1.10.60.10:FF:000003">
    <property type="entry name" value="HTH-type transcriptional regulator MntR"/>
    <property type="match status" value="1"/>
</dbReference>
<dbReference type="Gene3D" id="1.10.60.10">
    <property type="entry name" value="Iron dependent repressor, metal binding and dimerisation domain"/>
    <property type="match status" value="1"/>
</dbReference>
<dbReference type="Gene3D" id="1.10.10.10">
    <property type="entry name" value="Winged helix-like DNA-binding domain superfamily/Winged helix DNA-binding domain"/>
    <property type="match status" value="1"/>
</dbReference>
<dbReference type="HAMAP" id="MF_00732">
    <property type="entry name" value="HTH_MntR"/>
    <property type="match status" value="1"/>
</dbReference>
<dbReference type="InterPro" id="IPR050536">
    <property type="entry name" value="DtxR_MntR_Metal-Reg"/>
</dbReference>
<dbReference type="InterPro" id="IPR001367">
    <property type="entry name" value="Fe_dep_repressor"/>
</dbReference>
<dbReference type="InterPro" id="IPR036421">
    <property type="entry name" value="Fe_dep_repressor_sf"/>
</dbReference>
<dbReference type="InterPro" id="IPR022687">
    <property type="entry name" value="HTH_DTXR"/>
</dbReference>
<dbReference type="InterPro" id="IPR022897">
    <property type="entry name" value="HTH_tscrpt_reg_MntR"/>
</dbReference>
<dbReference type="InterPro" id="IPR022689">
    <property type="entry name" value="Iron_dep_repressor"/>
</dbReference>
<dbReference type="InterPro" id="IPR036388">
    <property type="entry name" value="WH-like_DNA-bd_sf"/>
</dbReference>
<dbReference type="InterPro" id="IPR036390">
    <property type="entry name" value="WH_DNA-bd_sf"/>
</dbReference>
<dbReference type="NCBIfam" id="NF003025">
    <property type="entry name" value="PRK03902.1"/>
    <property type="match status" value="1"/>
</dbReference>
<dbReference type="PANTHER" id="PTHR33238">
    <property type="entry name" value="IRON (METAL) DEPENDENT REPRESSOR, DTXR FAMILY"/>
    <property type="match status" value="1"/>
</dbReference>
<dbReference type="PANTHER" id="PTHR33238:SF11">
    <property type="entry name" value="TRANSCRIPTIONAL REGULATOR MNTR"/>
    <property type="match status" value="1"/>
</dbReference>
<dbReference type="Pfam" id="PF02742">
    <property type="entry name" value="Fe_dep_repr_C"/>
    <property type="match status" value="1"/>
</dbReference>
<dbReference type="Pfam" id="PF01325">
    <property type="entry name" value="Fe_dep_repress"/>
    <property type="match status" value="1"/>
</dbReference>
<dbReference type="SMART" id="SM00529">
    <property type="entry name" value="HTH_DTXR"/>
    <property type="match status" value="1"/>
</dbReference>
<dbReference type="SUPFAM" id="SSF47979">
    <property type="entry name" value="Iron-dependent repressor protein, dimerization domain"/>
    <property type="match status" value="1"/>
</dbReference>
<dbReference type="SUPFAM" id="SSF46785">
    <property type="entry name" value="Winged helix' DNA-binding domain"/>
    <property type="match status" value="1"/>
</dbReference>
<dbReference type="PROSITE" id="PS50944">
    <property type="entry name" value="HTH_DTXR"/>
    <property type="match status" value="1"/>
</dbReference>
<keyword id="KW-0010">Activator</keyword>
<keyword id="KW-0963">Cytoplasm</keyword>
<keyword id="KW-0238">DNA-binding</keyword>
<keyword id="KW-0464">Manganese</keyword>
<keyword id="KW-0479">Metal-binding</keyword>
<keyword id="KW-1185">Reference proteome</keyword>
<keyword id="KW-0678">Repressor</keyword>
<keyword id="KW-0804">Transcription</keyword>
<keyword id="KW-0805">Transcription regulation</keyword>
<protein>
    <recommendedName>
        <fullName evidence="1">HTH-type transcriptional regulator MntR</fullName>
    </recommendedName>
    <alternativeName>
        <fullName evidence="1">Manganese transport regulator</fullName>
    </alternativeName>
</protein>
<proteinExistence type="inferred from homology"/>
<accession>Q81M27</accession>
<accession>Q6HTI0</accession>
<accession>Q6KMS1</accession>